<reference key="1">
    <citation type="journal article" date="2006" name="PLoS Genet.">
        <title>The complete genome sequence and comparative genome analysis of the high pathogenicity Yersinia enterocolitica strain 8081.</title>
        <authorList>
            <person name="Thomson N.R."/>
            <person name="Howard S."/>
            <person name="Wren B.W."/>
            <person name="Holden M.T.G."/>
            <person name="Crossman L."/>
            <person name="Challis G.L."/>
            <person name="Churcher C."/>
            <person name="Mungall K."/>
            <person name="Brooks K."/>
            <person name="Chillingworth T."/>
            <person name="Feltwell T."/>
            <person name="Abdellah Z."/>
            <person name="Hauser H."/>
            <person name="Jagels K."/>
            <person name="Maddison M."/>
            <person name="Moule S."/>
            <person name="Sanders M."/>
            <person name="Whitehead S."/>
            <person name="Quail M.A."/>
            <person name="Dougan G."/>
            <person name="Parkhill J."/>
            <person name="Prentice M.B."/>
        </authorList>
    </citation>
    <scope>NUCLEOTIDE SEQUENCE [LARGE SCALE GENOMIC DNA]</scope>
    <source>
        <strain>NCTC 13174 / 8081</strain>
    </source>
</reference>
<comment type="function">
    <text evidence="1">Located on the platform of the 30S subunit, it bridges several disparate RNA helices of the 16S rRNA. Forms part of the Shine-Dalgarno cleft in the 70S ribosome.</text>
</comment>
<comment type="subunit">
    <text evidence="1">Part of the 30S ribosomal subunit. Interacts with proteins S7 and S18. Binds to IF-3.</text>
</comment>
<comment type="similarity">
    <text evidence="1">Belongs to the universal ribosomal protein uS11 family.</text>
</comment>
<proteinExistence type="inferred from homology"/>
<dbReference type="EMBL" id="AM286415">
    <property type="protein sequence ID" value="CAL13919.1"/>
    <property type="molecule type" value="Genomic_DNA"/>
</dbReference>
<dbReference type="RefSeq" id="WP_004709234.1">
    <property type="nucleotide sequence ID" value="NC_008800.1"/>
</dbReference>
<dbReference type="RefSeq" id="YP_001008045.1">
    <property type="nucleotide sequence ID" value="NC_008800.1"/>
</dbReference>
<dbReference type="SMR" id="A1JS03"/>
<dbReference type="GeneID" id="97454254"/>
<dbReference type="KEGG" id="yen:YE3900"/>
<dbReference type="PATRIC" id="fig|393305.7.peg.4150"/>
<dbReference type="eggNOG" id="COG0100">
    <property type="taxonomic scope" value="Bacteria"/>
</dbReference>
<dbReference type="HOGENOM" id="CLU_072439_5_0_6"/>
<dbReference type="OrthoDB" id="9806415at2"/>
<dbReference type="Proteomes" id="UP000000642">
    <property type="component" value="Chromosome"/>
</dbReference>
<dbReference type="GO" id="GO:1990904">
    <property type="term" value="C:ribonucleoprotein complex"/>
    <property type="evidence" value="ECO:0007669"/>
    <property type="project" value="UniProtKB-KW"/>
</dbReference>
<dbReference type="GO" id="GO:0005840">
    <property type="term" value="C:ribosome"/>
    <property type="evidence" value="ECO:0007669"/>
    <property type="project" value="UniProtKB-KW"/>
</dbReference>
<dbReference type="GO" id="GO:0019843">
    <property type="term" value="F:rRNA binding"/>
    <property type="evidence" value="ECO:0007669"/>
    <property type="project" value="UniProtKB-UniRule"/>
</dbReference>
<dbReference type="GO" id="GO:0003735">
    <property type="term" value="F:structural constituent of ribosome"/>
    <property type="evidence" value="ECO:0007669"/>
    <property type="project" value="InterPro"/>
</dbReference>
<dbReference type="GO" id="GO:0006412">
    <property type="term" value="P:translation"/>
    <property type="evidence" value="ECO:0007669"/>
    <property type="project" value="UniProtKB-UniRule"/>
</dbReference>
<dbReference type="FunFam" id="3.30.420.80:FF:000001">
    <property type="entry name" value="30S ribosomal protein S11"/>
    <property type="match status" value="1"/>
</dbReference>
<dbReference type="Gene3D" id="3.30.420.80">
    <property type="entry name" value="Ribosomal protein S11"/>
    <property type="match status" value="1"/>
</dbReference>
<dbReference type="HAMAP" id="MF_01310">
    <property type="entry name" value="Ribosomal_uS11"/>
    <property type="match status" value="1"/>
</dbReference>
<dbReference type="InterPro" id="IPR001971">
    <property type="entry name" value="Ribosomal_uS11"/>
</dbReference>
<dbReference type="InterPro" id="IPR019981">
    <property type="entry name" value="Ribosomal_uS11_bac-type"/>
</dbReference>
<dbReference type="InterPro" id="IPR018102">
    <property type="entry name" value="Ribosomal_uS11_CS"/>
</dbReference>
<dbReference type="InterPro" id="IPR036967">
    <property type="entry name" value="Ribosomal_uS11_sf"/>
</dbReference>
<dbReference type="NCBIfam" id="NF003698">
    <property type="entry name" value="PRK05309.1"/>
    <property type="match status" value="1"/>
</dbReference>
<dbReference type="NCBIfam" id="TIGR03632">
    <property type="entry name" value="uS11_bact"/>
    <property type="match status" value="1"/>
</dbReference>
<dbReference type="PANTHER" id="PTHR11759">
    <property type="entry name" value="40S RIBOSOMAL PROTEIN S14/30S RIBOSOMAL PROTEIN S11"/>
    <property type="match status" value="1"/>
</dbReference>
<dbReference type="Pfam" id="PF00411">
    <property type="entry name" value="Ribosomal_S11"/>
    <property type="match status" value="1"/>
</dbReference>
<dbReference type="PIRSF" id="PIRSF002131">
    <property type="entry name" value="Ribosomal_S11"/>
    <property type="match status" value="1"/>
</dbReference>
<dbReference type="SUPFAM" id="SSF53137">
    <property type="entry name" value="Translational machinery components"/>
    <property type="match status" value="1"/>
</dbReference>
<dbReference type="PROSITE" id="PS00054">
    <property type="entry name" value="RIBOSOMAL_S11"/>
    <property type="match status" value="1"/>
</dbReference>
<keyword id="KW-0687">Ribonucleoprotein</keyword>
<keyword id="KW-0689">Ribosomal protein</keyword>
<keyword id="KW-0694">RNA-binding</keyword>
<keyword id="KW-0699">rRNA-binding</keyword>
<organism>
    <name type="scientific">Yersinia enterocolitica serotype O:8 / biotype 1B (strain NCTC 13174 / 8081)</name>
    <dbReference type="NCBI Taxonomy" id="393305"/>
    <lineage>
        <taxon>Bacteria</taxon>
        <taxon>Pseudomonadati</taxon>
        <taxon>Pseudomonadota</taxon>
        <taxon>Gammaproteobacteria</taxon>
        <taxon>Enterobacterales</taxon>
        <taxon>Yersiniaceae</taxon>
        <taxon>Yersinia</taxon>
    </lineage>
</organism>
<sequence>MAKAPIRARKRVRKTVSDGVAHIHASFNNTIVTITDRQGNALGWATAGGSGFRGSRKSTPFAAQVAAERCADAVKEYGIKNLEVMVKGPGPGRESTIRALNAAGFRITNITDVTPIPHNGCRPPKKRRV</sequence>
<accession>A1JS03</accession>
<evidence type="ECO:0000255" key="1">
    <source>
        <dbReference type="HAMAP-Rule" id="MF_01310"/>
    </source>
</evidence>
<evidence type="ECO:0000305" key="2"/>
<protein>
    <recommendedName>
        <fullName evidence="1">Small ribosomal subunit protein uS11</fullName>
    </recommendedName>
    <alternativeName>
        <fullName evidence="2">30S ribosomal protein S11</fullName>
    </alternativeName>
</protein>
<feature type="chain" id="PRO_0000294888" description="Small ribosomal subunit protein uS11">
    <location>
        <begin position="1"/>
        <end position="129"/>
    </location>
</feature>
<name>RS11_YERE8</name>
<gene>
    <name evidence="1" type="primary">rpsK</name>
    <name type="ordered locus">YE3900</name>
</gene>